<proteinExistence type="inferred from homology"/>
<gene>
    <name evidence="1" type="primary">uppP2</name>
    <name type="ordered locus">Bcen_0838</name>
</gene>
<reference key="1">
    <citation type="submission" date="2006-05" db="EMBL/GenBank/DDBJ databases">
        <title>Complete sequence of chromosome 1 of Burkholderia cenocepacia AU 1054.</title>
        <authorList>
            <consortium name="US DOE Joint Genome Institute"/>
            <person name="Copeland A."/>
            <person name="Lucas S."/>
            <person name="Lapidus A."/>
            <person name="Barry K."/>
            <person name="Detter J.C."/>
            <person name="Glavina del Rio T."/>
            <person name="Hammon N."/>
            <person name="Israni S."/>
            <person name="Dalin E."/>
            <person name="Tice H."/>
            <person name="Pitluck S."/>
            <person name="Chain P."/>
            <person name="Malfatti S."/>
            <person name="Shin M."/>
            <person name="Vergez L."/>
            <person name="Schmutz J."/>
            <person name="Larimer F."/>
            <person name="Land M."/>
            <person name="Hauser L."/>
            <person name="Kyrpides N."/>
            <person name="Lykidis A."/>
            <person name="LiPuma J.J."/>
            <person name="Konstantinidis K."/>
            <person name="Tiedje J.M."/>
            <person name="Richardson P."/>
        </authorList>
    </citation>
    <scope>NUCLEOTIDE SEQUENCE [LARGE SCALE GENOMIC DNA]</scope>
    <source>
        <strain>AU 1054</strain>
    </source>
</reference>
<accession>Q1BXA8</accession>
<protein>
    <recommendedName>
        <fullName evidence="1">Undecaprenyl-diphosphatase 2</fullName>
        <ecNumber evidence="1">3.6.1.27</ecNumber>
    </recommendedName>
    <alternativeName>
        <fullName evidence="1">Bacitracin resistance protein 2</fullName>
    </alternativeName>
    <alternativeName>
        <fullName evidence="1">Undecaprenyl pyrophosphate phosphatase 2</fullName>
    </alternativeName>
</protein>
<evidence type="ECO:0000255" key="1">
    <source>
        <dbReference type="HAMAP-Rule" id="MF_01006"/>
    </source>
</evidence>
<name>UPPP2_BURO1</name>
<dbReference type="EC" id="3.6.1.27" evidence="1"/>
<dbReference type="EMBL" id="CP000378">
    <property type="protein sequence ID" value="ABF75747.1"/>
    <property type="molecule type" value="Genomic_DNA"/>
</dbReference>
<dbReference type="SMR" id="Q1BXA8"/>
<dbReference type="HOGENOM" id="CLU_060296_1_1_4"/>
<dbReference type="GO" id="GO:0005886">
    <property type="term" value="C:plasma membrane"/>
    <property type="evidence" value="ECO:0007669"/>
    <property type="project" value="UniProtKB-SubCell"/>
</dbReference>
<dbReference type="GO" id="GO:0050380">
    <property type="term" value="F:undecaprenyl-diphosphatase activity"/>
    <property type="evidence" value="ECO:0007669"/>
    <property type="project" value="UniProtKB-UniRule"/>
</dbReference>
<dbReference type="GO" id="GO:0071555">
    <property type="term" value="P:cell wall organization"/>
    <property type="evidence" value="ECO:0007669"/>
    <property type="project" value="UniProtKB-KW"/>
</dbReference>
<dbReference type="GO" id="GO:0009252">
    <property type="term" value="P:peptidoglycan biosynthetic process"/>
    <property type="evidence" value="ECO:0007669"/>
    <property type="project" value="UniProtKB-KW"/>
</dbReference>
<dbReference type="GO" id="GO:0008360">
    <property type="term" value="P:regulation of cell shape"/>
    <property type="evidence" value="ECO:0007669"/>
    <property type="project" value="UniProtKB-KW"/>
</dbReference>
<dbReference type="GO" id="GO:0046677">
    <property type="term" value="P:response to antibiotic"/>
    <property type="evidence" value="ECO:0007669"/>
    <property type="project" value="UniProtKB-UniRule"/>
</dbReference>
<dbReference type="HAMAP" id="MF_01006">
    <property type="entry name" value="Undec_diphosphatase"/>
    <property type="match status" value="1"/>
</dbReference>
<dbReference type="InterPro" id="IPR003824">
    <property type="entry name" value="UppP"/>
</dbReference>
<dbReference type="PANTHER" id="PTHR30622">
    <property type="entry name" value="UNDECAPRENYL-DIPHOSPHATASE"/>
    <property type="match status" value="1"/>
</dbReference>
<dbReference type="PANTHER" id="PTHR30622:SF4">
    <property type="entry name" value="UNDECAPRENYL-DIPHOSPHATASE"/>
    <property type="match status" value="1"/>
</dbReference>
<dbReference type="Pfam" id="PF02673">
    <property type="entry name" value="BacA"/>
    <property type="match status" value="1"/>
</dbReference>
<keyword id="KW-0046">Antibiotic resistance</keyword>
<keyword id="KW-0997">Cell inner membrane</keyword>
<keyword id="KW-1003">Cell membrane</keyword>
<keyword id="KW-0133">Cell shape</keyword>
<keyword id="KW-0961">Cell wall biogenesis/degradation</keyword>
<keyword id="KW-0378">Hydrolase</keyword>
<keyword id="KW-0472">Membrane</keyword>
<keyword id="KW-0573">Peptidoglycan synthesis</keyword>
<keyword id="KW-0812">Transmembrane</keyword>
<keyword id="KW-1133">Transmembrane helix</keyword>
<organism>
    <name type="scientific">Burkholderia orbicola (strain AU 1054)</name>
    <dbReference type="NCBI Taxonomy" id="331271"/>
    <lineage>
        <taxon>Bacteria</taxon>
        <taxon>Pseudomonadati</taxon>
        <taxon>Pseudomonadota</taxon>
        <taxon>Betaproteobacteria</taxon>
        <taxon>Burkholderiales</taxon>
        <taxon>Burkholderiaceae</taxon>
        <taxon>Burkholderia</taxon>
        <taxon>Burkholderia cepacia complex</taxon>
        <taxon>Burkholderia orbicola</taxon>
    </lineage>
</organism>
<comment type="function">
    <text evidence="1">Catalyzes the dephosphorylation of undecaprenyl diphosphate (UPP). Confers resistance to bacitracin.</text>
</comment>
<comment type="catalytic activity">
    <reaction evidence="1">
        <text>di-trans,octa-cis-undecaprenyl diphosphate + H2O = di-trans,octa-cis-undecaprenyl phosphate + phosphate + H(+)</text>
        <dbReference type="Rhea" id="RHEA:28094"/>
        <dbReference type="ChEBI" id="CHEBI:15377"/>
        <dbReference type="ChEBI" id="CHEBI:15378"/>
        <dbReference type="ChEBI" id="CHEBI:43474"/>
        <dbReference type="ChEBI" id="CHEBI:58405"/>
        <dbReference type="ChEBI" id="CHEBI:60392"/>
        <dbReference type="EC" id="3.6.1.27"/>
    </reaction>
</comment>
<comment type="subcellular location">
    <subcellularLocation>
        <location evidence="1">Cell inner membrane</location>
        <topology evidence="1">Multi-pass membrane protein</topology>
    </subcellularLocation>
</comment>
<comment type="miscellaneous">
    <text>Bacitracin is thought to be involved in the inhibition of peptidoglycan synthesis by sequestering undecaprenyl diphosphate, thereby reducing the pool of lipid carrier available.</text>
</comment>
<comment type="similarity">
    <text evidence="1">Belongs to the UppP family.</text>
</comment>
<sequence>MSLWFLVFLSVLQGVTELFPVSSLGHTLLVPALFGMHIDKHAPQLLPFLVALHLGTALALLWYFRARWIALIGGFFAQLGGRKNDDGHLMWALIIGTIPTGIVGLLLEKRIERVFHDLRIVAIALIVNGVLLWLGDRIQRSRAHQAPEKMTFKQAFFVGLAQIGALIPGFSRSGLTMIAGNVAGLTAEKAAEFSFLLGTPIIFAAGVLELPKLFHARDQLADALLGGVLTAIAAYLSVRFLMRYFEGRGRLASFGVYCVIAGVFCLGWFMLHPQPV</sequence>
<feature type="chain" id="PRO_0000250227" description="Undecaprenyl-diphosphatase 2">
    <location>
        <begin position="1"/>
        <end position="276"/>
    </location>
</feature>
<feature type="transmembrane region" description="Helical" evidence="1">
    <location>
        <begin position="1"/>
        <end position="21"/>
    </location>
</feature>
<feature type="transmembrane region" description="Helical" evidence="1">
    <location>
        <begin position="44"/>
        <end position="64"/>
    </location>
</feature>
<feature type="transmembrane region" description="Helical" evidence="1">
    <location>
        <begin position="87"/>
        <end position="107"/>
    </location>
</feature>
<feature type="transmembrane region" description="Helical" evidence="1">
    <location>
        <begin position="114"/>
        <end position="134"/>
    </location>
</feature>
<feature type="transmembrane region" description="Helical" evidence="1">
    <location>
        <begin position="150"/>
        <end position="170"/>
    </location>
</feature>
<feature type="transmembrane region" description="Helical" evidence="1">
    <location>
        <begin position="190"/>
        <end position="210"/>
    </location>
</feature>
<feature type="transmembrane region" description="Helical" evidence="1">
    <location>
        <begin position="222"/>
        <end position="242"/>
    </location>
</feature>
<feature type="transmembrane region" description="Helical" evidence="1">
    <location>
        <begin position="251"/>
        <end position="271"/>
    </location>
</feature>